<keyword id="KW-0067">ATP-binding</keyword>
<keyword id="KW-0963">Cytoplasm</keyword>
<keyword id="KW-0436">Ligase</keyword>
<keyword id="KW-0547">Nucleotide-binding</keyword>
<keyword id="KW-0566">Pantothenate biosynthesis</keyword>
<accession>P65659</accession>
<accession>Q99R39</accession>
<proteinExistence type="evidence at protein level"/>
<feature type="chain" id="PRO_0000128274" description="Pantothenate synthetase">
    <location>
        <begin position="1"/>
        <end position="283"/>
    </location>
</feature>
<feature type="active site" description="Proton donor" evidence="1">
    <location>
        <position position="38"/>
    </location>
</feature>
<feature type="binding site" evidence="1">
    <location>
        <begin position="31"/>
        <end position="38"/>
    </location>
    <ligand>
        <name>ATP</name>
        <dbReference type="ChEBI" id="CHEBI:30616"/>
    </ligand>
</feature>
<feature type="binding site" evidence="1">
    <location>
        <position position="62"/>
    </location>
    <ligand>
        <name>(R)-pantoate</name>
        <dbReference type="ChEBI" id="CHEBI:15980"/>
    </ligand>
</feature>
<feature type="binding site" evidence="1">
    <location>
        <position position="62"/>
    </location>
    <ligand>
        <name>beta-alanine</name>
        <dbReference type="ChEBI" id="CHEBI:57966"/>
    </ligand>
</feature>
<feature type="binding site" evidence="1">
    <location>
        <begin position="148"/>
        <end position="151"/>
    </location>
    <ligand>
        <name>ATP</name>
        <dbReference type="ChEBI" id="CHEBI:30616"/>
    </ligand>
</feature>
<feature type="binding site" evidence="1">
    <location>
        <position position="154"/>
    </location>
    <ligand>
        <name>(R)-pantoate</name>
        <dbReference type="ChEBI" id="CHEBI:15980"/>
    </ligand>
</feature>
<feature type="binding site" evidence="1">
    <location>
        <position position="177"/>
    </location>
    <ligand>
        <name>ATP</name>
        <dbReference type="ChEBI" id="CHEBI:30616"/>
    </ligand>
</feature>
<feature type="binding site" evidence="1">
    <location>
        <begin position="185"/>
        <end position="188"/>
    </location>
    <ligand>
        <name>ATP</name>
        <dbReference type="ChEBI" id="CHEBI:30616"/>
    </ligand>
</feature>
<protein>
    <recommendedName>
        <fullName evidence="1">Pantothenate synthetase</fullName>
        <shortName evidence="1">PS</shortName>
        <ecNumber evidence="1">6.3.2.1</ecNumber>
    </recommendedName>
    <alternativeName>
        <fullName evidence="1">Pantoate--beta-alanine ligase</fullName>
    </alternativeName>
    <alternativeName>
        <fullName evidence="1">Pantoate-activating enzyme</fullName>
    </alternativeName>
</protein>
<reference key="1">
    <citation type="journal article" date="2001" name="Lancet">
        <title>Whole genome sequencing of meticillin-resistant Staphylococcus aureus.</title>
        <authorList>
            <person name="Kuroda M."/>
            <person name="Ohta T."/>
            <person name="Uchiyama I."/>
            <person name="Baba T."/>
            <person name="Yuzawa H."/>
            <person name="Kobayashi I."/>
            <person name="Cui L."/>
            <person name="Oguchi A."/>
            <person name="Aoki K."/>
            <person name="Nagai Y."/>
            <person name="Lian J.-Q."/>
            <person name="Ito T."/>
            <person name="Kanamori M."/>
            <person name="Matsumaru H."/>
            <person name="Maruyama A."/>
            <person name="Murakami H."/>
            <person name="Hosoyama A."/>
            <person name="Mizutani-Ui Y."/>
            <person name="Takahashi N.K."/>
            <person name="Sawano T."/>
            <person name="Inoue R."/>
            <person name="Kaito C."/>
            <person name="Sekimizu K."/>
            <person name="Hirakawa H."/>
            <person name="Kuhara S."/>
            <person name="Goto S."/>
            <person name="Yabuzaki J."/>
            <person name="Kanehisa M."/>
            <person name="Yamashita A."/>
            <person name="Oshima K."/>
            <person name="Furuya K."/>
            <person name="Yoshino C."/>
            <person name="Shiba T."/>
            <person name="Hattori M."/>
            <person name="Ogasawara N."/>
            <person name="Hayashi H."/>
            <person name="Hiramatsu K."/>
        </authorList>
    </citation>
    <scope>NUCLEOTIDE SEQUENCE [LARGE SCALE GENOMIC DNA]</scope>
    <source>
        <strain>N315</strain>
    </source>
</reference>
<reference key="2">
    <citation type="submission" date="2007-10" db="UniProtKB">
        <title>Shotgun proteomic analysis of total and membrane protein extracts of S. aureus strain N315.</title>
        <authorList>
            <person name="Vaezzadeh A.R."/>
            <person name="Deshusses J."/>
            <person name="Lescuyer P."/>
            <person name="Hochstrasser D.F."/>
        </authorList>
    </citation>
    <scope>IDENTIFICATION BY MASS SPECTROMETRY [LARGE SCALE ANALYSIS]</scope>
    <source>
        <strain>N315</strain>
    </source>
</reference>
<comment type="function">
    <text evidence="1">Catalyzes the condensation of pantoate with beta-alanine in an ATP-dependent reaction via a pantoyl-adenylate intermediate.</text>
</comment>
<comment type="catalytic activity">
    <reaction evidence="1">
        <text>(R)-pantoate + beta-alanine + ATP = (R)-pantothenate + AMP + diphosphate + H(+)</text>
        <dbReference type="Rhea" id="RHEA:10912"/>
        <dbReference type="ChEBI" id="CHEBI:15378"/>
        <dbReference type="ChEBI" id="CHEBI:15980"/>
        <dbReference type="ChEBI" id="CHEBI:29032"/>
        <dbReference type="ChEBI" id="CHEBI:30616"/>
        <dbReference type="ChEBI" id="CHEBI:33019"/>
        <dbReference type="ChEBI" id="CHEBI:57966"/>
        <dbReference type="ChEBI" id="CHEBI:456215"/>
        <dbReference type="EC" id="6.3.2.1"/>
    </reaction>
</comment>
<comment type="pathway">
    <text evidence="1">Cofactor biosynthesis; (R)-pantothenate biosynthesis; (R)-pantothenate from (R)-pantoate and beta-alanine: step 1/1.</text>
</comment>
<comment type="subunit">
    <text evidence="1">Homodimer.</text>
</comment>
<comment type="subcellular location">
    <subcellularLocation>
        <location evidence="1">Cytoplasm</location>
    </subcellularLocation>
</comment>
<comment type="miscellaneous">
    <text evidence="1">The reaction proceeds by a bi uni uni bi ping pong mechanism.</text>
</comment>
<comment type="similarity">
    <text evidence="1">Belongs to the pantothenate synthetase family.</text>
</comment>
<gene>
    <name evidence="1" type="primary">panC</name>
    <name type="ordered locus">SA2391</name>
</gene>
<evidence type="ECO:0000255" key="1">
    <source>
        <dbReference type="HAMAP-Rule" id="MF_00158"/>
    </source>
</evidence>
<sequence>MTKLITTVKEMQHIVKAAKRSGTTIGFIPTMGALHDGHLTMVRESVSTNDITVVSVFVNPLQFGPNEDFDAYPRQIDKDLELVSEVGADIVFHPAVEDIYPGELGIDVKVGPLADVLEGAKRPGHFDGVVTVVNKLFNIVMPDYAYFGKKDAQQLAIVEQMVKDFNHAVEIIGIDIVREADGLAKSSRNVYLTEQERQEAVHLSKSLLLAQALYQDGERQSKVIIDRVTEYLESHISGRIEEVAVYSYPQLVEQHEITGRIFISLAVKFSKARLIDNIIIGAE</sequence>
<dbReference type="EC" id="6.3.2.1" evidence="1"/>
<dbReference type="EMBL" id="BA000018">
    <property type="protein sequence ID" value="BAB43696.1"/>
    <property type="molecule type" value="Genomic_DNA"/>
</dbReference>
<dbReference type="PIR" id="F90066">
    <property type="entry name" value="F90066"/>
</dbReference>
<dbReference type="RefSeq" id="WP_000163737.1">
    <property type="nucleotide sequence ID" value="NC_002745.2"/>
</dbReference>
<dbReference type="SMR" id="P65659"/>
<dbReference type="EnsemblBacteria" id="BAB43696">
    <property type="protein sequence ID" value="BAB43696"/>
    <property type="gene ID" value="BAB43696"/>
</dbReference>
<dbReference type="KEGG" id="sau:SA2391"/>
<dbReference type="HOGENOM" id="CLU_047148_0_0_9"/>
<dbReference type="UniPathway" id="UPA00028">
    <property type="reaction ID" value="UER00005"/>
</dbReference>
<dbReference type="GO" id="GO:0005829">
    <property type="term" value="C:cytosol"/>
    <property type="evidence" value="ECO:0007669"/>
    <property type="project" value="TreeGrafter"/>
</dbReference>
<dbReference type="GO" id="GO:0005524">
    <property type="term" value="F:ATP binding"/>
    <property type="evidence" value="ECO:0007669"/>
    <property type="project" value="UniProtKB-KW"/>
</dbReference>
<dbReference type="GO" id="GO:0004592">
    <property type="term" value="F:pantoate-beta-alanine ligase activity"/>
    <property type="evidence" value="ECO:0007669"/>
    <property type="project" value="UniProtKB-UniRule"/>
</dbReference>
<dbReference type="GO" id="GO:0015940">
    <property type="term" value="P:pantothenate biosynthetic process"/>
    <property type="evidence" value="ECO:0007669"/>
    <property type="project" value="UniProtKB-UniRule"/>
</dbReference>
<dbReference type="CDD" id="cd00560">
    <property type="entry name" value="PanC"/>
    <property type="match status" value="1"/>
</dbReference>
<dbReference type="FunFam" id="3.30.1300.10:FF:000001">
    <property type="entry name" value="Pantothenate synthetase"/>
    <property type="match status" value="1"/>
</dbReference>
<dbReference type="FunFam" id="3.40.50.620:FF:000013">
    <property type="entry name" value="Pantothenate synthetase"/>
    <property type="match status" value="1"/>
</dbReference>
<dbReference type="Gene3D" id="3.40.50.620">
    <property type="entry name" value="HUPs"/>
    <property type="match status" value="1"/>
</dbReference>
<dbReference type="Gene3D" id="3.30.1300.10">
    <property type="entry name" value="Pantoate-beta-alanine ligase, C-terminal domain"/>
    <property type="match status" value="1"/>
</dbReference>
<dbReference type="HAMAP" id="MF_00158">
    <property type="entry name" value="PanC"/>
    <property type="match status" value="1"/>
</dbReference>
<dbReference type="InterPro" id="IPR003721">
    <property type="entry name" value="Pantoate_ligase"/>
</dbReference>
<dbReference type="InterPro" id="IPR042176">
    <property type="entry name" value="Pantoate_ligase_C"/>
</dbReference>
<dbReference type="InterPro" id="IPR014729">
    <property type="entry name" value="Rossmann-like_a/b/a_fold"/>
</dbReference>
<dbReference type="NCBIfam" id="TIGR00018">
    <property type="entry name" value="panC"/>
    <property type="match status" value="1"/>
</dbReference>
<dbReference type="PANTHER" id="PTHR21299">
    <property type="entry name" value="CYTIDYLATE KINASE/PANTOATE-BETA-ALANINE LIGASE"/>
    <property type="match status" value="1"/>
</dbReference>
<dbReference type="PANTHER" id="PTHR21299:SF1">
    <property type="entry name" value="PANTOATE--BETA-ALANINE LIGASE"/>
    <property type="match status" value="1"/>
</dbReference>
<dbReference type="Pfam" id="PF02569">
    <property type="entry name" value="Pantoate_ligase"/>
    <property type="match status" value="1"/>
</dbReference>
<dbReference type="SUPFAM" id="SSF52374">
    <property type="entry name" value="Nucleotidylyl transferase"/>
    <property type="match status" value="1"/>
</dbReference>
<organism>
    <name type="scientific">Staphylococcus aureus (strain N315)</name>
    <dbReference type="NCBI Taxonomy" id="158879"/>
    <lineage>
        <taxon>Bacteria</taxon>
        <taxon>Bacillati</taxon>
        <taxon>Bacillota</taxon>
        <taxon>Bacilli</taxon>
        <taxon>Bacillales</taxon>
        <taxon>Staphylococcaceae</taxon>
        <taxon>Staphylococcus</taxon>
    </lineage>
</organism>
<name>PANC_STAAN</name>